<accession>Q7CHQ3</accession>
<accession>Q74VB4</accession>
<comment type="function">
    <text evidence="1">Part of the ABC transporter complex MglABC involved in galactose/methyl galactoside import. Responsible for energy coupling to the transport system.</text>
</comment>
<comment type="catalytic activity">
    <reaction evidence="1">
        <text>D-galactose(out) + ATP + H2O = D-galactose(in) + ADP + phosphate + H(+)</text>
        <dbReference type="Rhea" id="RHEA:60156"/>
        <dbReference type="ChEBI" id="CHEBI:4139"/>
        <dbReference type="ChEBI" id="CHEBI:15377"/>
        <dbReference type="ChEBI" id="CHEBI:15378"/>
        <dbReference type="ChEBI" id="CHEBI:30616"/>
        <dbReference type="ChEBI" id="CHEBI:43474"/>
        <dbReference type="ChEBI" id="CHEBI:456216"/>
        <dbReference type="EC" id="7.5.2.11"/>
    </reaction>
    <physiologicalReaction direction="left-to-right" evidence="1">
        <dbReference type="Rhea" id="RHEA:60157"/>
    </physiologicalReaction>
</comment>
<comment type="catalytic activity">
    <reaction evidence="1">
        <text>methyl beta-D-galactoside(out) + ATP + H2O = methyl beta-D-galactoside(in) + ADP + phosphate + H(+)</text>
        <dbReference type="Rhea" id="RHEA:72531"/>
        <dbReference type="ChEBI" id="CHEBI:15377"/>
        <dbReference type="ChEBI" id="CHEBI:15378"/>
        <dbReference type="ChEBI" id="CHEBI:17540"/>
        <dbReference type="ChEBI" id="CHEBI:30616"/>
        <dbReference type="ChEBI" id="CHEBI:43474"/>
        <dbReference type="ChEBI" id="CHEBI:456216"/>
    </reaction>
    <physiologicalReaction direction="left-to-right" evidence="1">
        <dbReference type="Rhea" id="RHEA:72532"/>
    </physiologicalReaction>
</comment>
<comment type="subunit">
    <text evidence="1">The complex is composed of one ATP-binding protein (MglA), two transmembrane proteins (MglC) and a solute-binding protein (MglB).</text>
</comment>
<comment type="subcellular location">
    <subcellularLocation>
        <location evidence="1">Cell inner membrane</location>
        <topology evidence="1">Peripheral membrane protein</topology>
    </subcellularLocation>
</comment>
<comment type="similarity">
    <text evidence="1">Belongs to the ABC transporter superfamily. Galactose/methyl galactoside importer (TC 3.A.1.2.3) family.</text>
</comment>
<reference key="1">
    <citation type="journal article" date="2001" name="Nature">
        <title>Genome sequence of Yersinia pestis, the causative agent of plague.</title>
        <authorList>
            <person name="Parkhill J."/>
            <person name="Wren B.W."/>
            <person name="Thomson N.R."/>
            <person name="Titball R.W."/>
            <person name="Holden M.T.G."/>
            <person name="Prentice M.B."/>
            <person name="Sebaihia M."/>
            <person name="James K.D."/>
            <person name="Churcher C.M."/>
            <person name="Mungall K.L."/>
            <person name="Baker S."/>
            <person name="Basham D."/>
            <person name="Bentley S.D."/>
            <person name="Brooks K."/>
            <person name="Cerdeno-Tarraga A.-M."/>
            <person name="Chillingworth T."/>
            <person name="Cronin A."/>
            <person name="Davies R.M."/>
            <person name="Davis P."/>
            <person name="Dougan G."/>
            <person name="Feltwell T."/>
            <person name="Hamlin N."/>
            <person name="Holroyd S."/>
            <person name="Jagels K."/>
            <person name="Karlyshev A.V."/>
            <person name="Leather S."/>
            <person name="Moule S."/>
            <person name="Oyston P.C.F."/>
            <person name="Quail M.A."/>
            <person name="Rutherford K.M."/>
            <person name="Simmonds M."/>
            <person name="Skelton J."/>
            <person name="Stevens K."/>
            <person name="Whitehead S."/>
            <person name="Barrell B.G."/>
        </authorList>
    </citation>
    <scope>NUCLEOTIDE SEQUENCE [LARGE SCALE GENOMIC DNA]</scope>
    <source>
        <strain>CO-92 / Biovar Orientalis</strain>
    </source>
</reference>
<reference key="2">
    <citation type="journal article" date="2002" name="J. Bacteriol.">
        <title>Genome sequence of Yersinia pestis KIM.</title>
        <authorList>
            <person name="Deng W."/>
            <person name="Burland V."/>
            <person name="Plunkett G. III"/>
            <person name="Boutin A."/>
            <person name="Mayhew G.F."/>
            <person name="Liss P."/>
            <person name="Perna N.T."/>
            <person name="Rose D.J."/>
            <person name="Mau B."/>
            <person name="Zhou S."/>
            <person name="Schwartz D.C."/>
            <person name="Fetherston J.D."/>
            <person name="Lindler L.E."/>
            <person name="Brubaker R.R."/>
            <person name="Plano G.V."/>
            <person name="Straley S.C."/>
            <person name="McDonough K.A."/>
            <person name="Nilles M.L."/>
            <person name="Matson J.S."/>
            <person name="Blattner F.R."/>
            <person name="Perry R.D."/>
        </authorList>
    </citation>
    <scope>NUCLEOTIDE SEQUENCE [LARGE SCALE GENOMIC DNA]</scope>
    <source>
        <strain>KIM10+ / Biovar Mediaevalis</strain>
    </source>
</reference>
<reference key="3">
    <citation type="journal article" date="2004" name="DNA Res.">
        <title>Complete genome sequence of Yersinia pestis strain 91001, an isolate avirulent to humans.</title>
        <authorList>
            <person name="Song Y."/>
            <person name="Tong Z."/>
            <person name="Wang J."/>
            <person name="Wang L."/>
            <person name="Guo Z."/>
            <person name="Han Y."/>
            <person name="Zhang J."/>
            <person name="Pei D."/>
            <person name="Zhou D."/>
            <person name="Qin H."/>
            <person name="Pang X."/>
            <person name="Han Y."/>
            <person name="Zhai J."/>
            <person name="Li M."/>
            <person name="Cui B."/>
            <person name="Qi Z."/>
            <person name="Jin L."/>
            <person name="Dai R."/>
            <person name="Chen F."/>
            <person name="Li S."/>
            <person name="Ye C."/>
            <person name="Du Z."/>
            <person name="Lin W."/>
            <person name="Wang J."/>
            <person name="Yu J."/>
            <person name="Yang H."/>
            <person name="Wang J."/>
            <person name="Huang P."/>
            <person name="Yang R."/>
        </authorList>
    </citation>
    <scope>NUCLEOTIDE SEQUENCE [LARGE SCALE GENOMIC DNA]</scope>
    <source>
        <strain>91001 / Biovar Mediaevalis</strain>
    </source>
</reference>
<evidence type="ECO:0000255" key="1">
    <source>
        <dbReference type="HAMAP-Rule" id="MF_01717"/>
    </source>
</evidence>
<sequence>MADINTAQPRDWLLEMSNIDKSFPGVKALDNVNLKVRPYSIHALMGENGAGKSTLLKCLFGIYKKDSGSIIFQGQEIEFKSSKEALEQGVSMVHQELNLVLQRTVMDNMWLGRYPTKGFFVDQDKMYKETKAIFDELDIDIDPRDKVATLSVSQMQMIEIAKAFSYNAKIVIMDEPTSSLTEKEVNHLFTIIRKLKARGCGIVYISHKMEEIFQLCDEITILRDGQWITTQPLDGLTMDQIISMMVGRSLSQRFPDRLNKPGEVILEVKNLTSLRQPSIRDVSFDLHKGEILGIAGLVGAKRTDIVETLFGIREKVTGTIKLHGKNINNHSANEAINHGFALVTEERRSTGIYAYLDISFNSLISNIRNYKNKFGLLDNTRMKSDTQWVIDAMRVKTPGHRTNIGSLSGGNQQKVIIGRWLLTQPEILMLDEPTRGIDVGAKFEIYQLMTELAKKDKGIIIISSEMPELLGITDRILVMSNGQVAGIVDTKQTTQNEILRLASLHL</sequence>
<protein>
    <recommendedName>
        <fullName evidence="1">Galactose/methyl galactoside import ATP-binding protein MglA</fullName>
        <ecNumber evidence="1">7.5.2.11</ecNumber>
    </recommendedName>
</protein>
<proteinExistence type="inferred from homology"/>
<name>MGLA_YERPE</name>
<organism>
    <name type="scientific">Yersinia pestis</name>
    <dbReference type="NCBI Taxonomy" id="632"/>
    <lineage>
        <taxon>Bacteria</taxon>
        <taxon>Pseudomonadati</taxon>
        <taxon>Pseudomonadota</taxon>
        <taxon>Gammaproteobacteria</taxon>
        <taxon>Enterobacterales</taxon>
        <taxon>Yersiniaceae</taxon>
        <taxon>Yersinia</taxon>
    </lineage>
</organism>
<keyword id="KW-0067">ATP-binding</keyword>
<keyword id="KW-0997">Cell inner membrane</keyword>
<keyword id="KW-1003">Cell membrane</keyword>
<keyword id="KW-0472">Membrane</keyword>
<keyword id="KW-0547">Nucleotide-binding</keyword>
<keyword id="KW-1185">Reference proteome</keyword>
<keyword id="KW-0677">Repeat</keyword>
<keyword id="KW-0762">Sugar transport</keyword>
<keyword id="KW-1278">Translocase</keyword>
<keyword id="KW-0813">Transport</keyword>
<gene>
    <name evidence="1" type="primary">mglA</name>
    <name type="ordered locus">YPO1508</name>
    <name type="ordered locus">y2661</name>
    <name type="ordered locus">YP_1398</name>
</gene>
<dbReference type="EC" id="7.5.2.11" evidence="1"/>
<dbReference type="EMBL" id="AL590842">
    <property type="protein sequence ID" value="CAL20154.1"/>
    <property type="molecule type" value="Genomic_DNA"/>
</dbReference>
<dbReference type="EMBL" id="AE009952">
    <property type="protein sequence ID" value="AAM86214.1"/>
    <property type="molecule type" value="Genomic_DNA"/>
</dbReference>
<dbReference type="EMBL" id="AE017042">
    <property type="protein sequence ID" value="AAS61639.1"/>
    <property type="molecule type" value="Genomic_DNA"/>
</dbReference>
<dbReference type="PIR" id="AH0183">
    <property type="entry name" value="AH0183"/>
</dbReference>
<dbReference type="RefSeq" id="WP_002211964.1">
    <property type="nucleotide sequence ID" value="NZ_WUCM01000063.1"/>
</dbReference>
<dbReference type="RefSeq" id="YP_002346524.1">
    <property type="nucleotide sequence ID" value="NC_003143.1"/>
</dbReference>
<dbReference type="SMR" id="Q7CHQ3"/>
<dbReference type="STRING" id="214092.YPO1508"/>
<dbReference type="PaxDb" id="214092-YPO1508"/>
<dbReference type="DNASU" id="1147608"/>
<dbReference type="EnsemblBacteria" id="AAS61639">
    <property type="protein sequence ID" value="AAS61639"/>
    <property type="gene ID" value="YP_1398"/>
</dbReference>
<dbReference type="GeneID" id="57977060"/>
<dbReference type="KEGG" id="ype:YPO1508"/>
<dbReference type="KEGG" id="ypk:y2661"/>
<dbReference type="KEGG" id="ypm:YP_1398"/>
<dbReference type="PATRIC" id="fig|214092.21.peg.1840"/>
<dbReference type="eggNOG" id="COG1129">
    <property type="taxonomic scope" value="Bacteria"/>
</dbReference>
<dbReference type="HOGENOM" id="CLU_000604_92_3_6"/>
<dbReference type="OMA" id="WIFAGPD"/>
<dbReference type="OrthoDB" id="9776369at2"/>
<dbReference type="Proteomes" id="UP000000815">
    <property type="component" value="Chromosome"/>
</dbReference>
<dbReference type="Proteomes" id="UP000001019">
    <property type="component" value="Chromosome"/>
</dbReference>
<dbReference type="Proteomes" id="UP000002490">
    <property type="component" value="Chromosome"/>
</dbReference>
<dbReference type="GO" id="GO:0005886">
    <property type="term" value="C:plasma membrane"/>
    <property type="evidence" value="ECO:0007669"/>
    <property type="project" value="UniProtKB-SubCell"/>
</dbReference>
<dbReference type="GO" id="GO:0005524">
    <property type="term" value="F:ATP binding"/>
    <property type="evidence" value="ECO:0007669"/>
    <property type="project" value="UniProtKB-KW"/>
</dbReference>
<dbReference type="GO" id="GO:0016887">
    <property type="term" value="F:ATP hydrolysis activity"/>
    <property type="evidence" value="ECO:0007669"/>
    <property type="project" value="InterPro"/>
</dbReference>
<dbReference type="CDD" id="cd03216">
    <property type="entry name" value="ABC_Carb_Monos_I"/>
    <property type="match status" value="1"/>
</dbReference>
<dbReference type="CDD" id="cd03215">
    <property type="entry name" value="ABC_Carb_Monos_II"/>
    <property type="match status" value="1"/>
</dbReference>
<dbReference type="FunFam" id="3.40.50.300:FF:000126">
    <property type="entry name" value="Galactose/methyl galactoside import ATP-binding protein MglA"/>
    <property type="match status" value="1"/>
</dbReference>
<dbReference type="FunFam" id="3.40.50.300:FF:000127">
    <property type="entry name" value="Ribose import ATP-binding protein RbsA"/>
    <property type="match status" value="1"/>
</dbReference>
<dbReference type="Gene3D" id="3.40.50.300">
    <property type="entry name" value="P-loop containing nucleotide triphosphate hydrolases"/>
    <property type="match status" value="2"/>
</dbReference>
<dbReference type="InterPro" id="IPR003593">
    <property type="entry name" value="AAA+_ATPase"/>
</dbReference>
<dbReference type="InterPro" id="IPR050107">
    <property type="entry name" value="ABC_carbohydrate_import_ATPase"/>
</dbReference>
<dbReference type="InterPro" id="IPR003439">
    <property type="entry name" value="ABC_transporter-like_ATP-bd"/>
</dbReference>
<dbReference type="InterPro" id="IPR017871">
    <property type="entry name" value="ABC_transporter-like_CS"/>
</dbReference>
<dbReference type="InterPro" id="IPR027417">
    <property type="entry name" value="P-loop_NTPase"/>
</dbReference>
<dbReference type="NCBIfam" id="NF008215">
    <property type="entry name" value="PRK10982.1"/>
    <property type="match status" value="1"/>
</dbReference>
<dbReference type="PANTHER" id="PTHR43790">
    <property type="entry name" value="CARBOHYDRATE TRANSPORT ATP-BINDING PROTEIN MG119-RELATED"/>
    <property type="match status" value="1"/>
</dbReference>
<dbReference type="PANTHER" id="PTHR43790:SF7">
    <property type="entry name" value="GALACTOSE_METHYL GALACTOSIDE IMPORT ATP-BINDING PROTEIN MGLA"/>
    <property type="match status" value="1"/>
</dbReference>
<dbReference type="Pfam" id="PF00005">
    <property type="entry name" value="ABC_tran"/>
    <property type="match status" value="2"/>
</dbReference>
<dbReference type="SMART" id="SM00382">
    <property type="entry name" value="AAA"/>
    <property type="match status" value="2"/>
</dbReference>
<dbReference type="SUPFAM" id="SSF52540">
    <property type="entry name" value="P-loop containing nucleoside triphosphate hydrolases"/>
    <property type="match status" value="2"/>
</dbReference>
<dbReference type="PROSITE" id="PS00211">
    <property type="entry name" value="ABC_TRANSPORTER_1"/>
    <property type="match status" value="1"/>
</dbReference>
<dbReference type="PROSITE" id="PS50893">
    <property type="entry name" value="ABC_TRANSPORTER_2"/>
    <property type="match status" value="2"/>
</dbReference>
<dbReference type="PROSITE" id="PS51260">
    <property type="entry name" value="MGLA"/>
    <property type="match status" value="1"/>
</dbReference>
<feature type="chain" id="PRO_0000261380" description="Galactose/methyl galactoside import ATP-binding protein MglA">
    <location>
        <begin position="1"/>
        <end position="506"/>
    </location>
</feature>
<feature type="domain" description="ABC transporter 1" evidence="1">
    <location>
        <begin position="14"/>
        <end position="249"/>
    </location>
</feature>
<feature type="domain" description="ABC transporter 2" evidence="1">
    <location>
        <begin position="264"/>
        <end position="506"/>
    </location>
</feature>
<feature type="binding site" evidence="1">
    <location>
        <begin position="46"/>
        <end position="53"/>
    </location>
    <ligand>
        <name>ATP</name>
        <dbReference type="ChEBI" id="CHEBI:30616"/>
    </ligand>
</feature>